<dbReference type="EC" id="2.8.2.21" evidence="5"/>
<dbReference type="EMBL" id="AF280087">
    <property type="protein sequence ID" value="AAG48245.1"/>
    <property type="molecule type" value="mRNA"/>
</dbReference>
<dbReference type="EMBL" id="BC030667">
    <property type="protein sequence ID" value="AAH30667.1"/>
    <property type="molecule type" value="mRNA"/>
</dbReference>
<dbReference type="EMBL" id="AK011344">
    <property type="protein sequence ID" value="BAB27556.2"/>
    <property type="molecule type" value="mRNA"/>
</dbReference>
<dbReference type="CCDS" id="CCDS16450.1"/>
<dbReference type="RefSeq" id="NP_001343481.1">
    <property type="nucleotide sequence ID" value="NM_001356552.1"/>
</dbReference>
<dbReference type="RefSeq" id="NP_001343482.1">
    <property type="nucleotide sequence ID" value="NM_001356553.1"/>
</dbReference>
<dbReference type="RefSeq" id="NP_076339.1">
    <property type="nucleotide sequence ID" value="NM_023850.2"/>
</dbReference>
<dbReference type="RefSeq" id="XP_006500451.1">
    <property type="nucleotide sequence ID" value="XM_006500388.1"/>
</dbReference>
<dbReference type="RefSeq" id="XP_006500452.1">
    <property type="nucleotide sequence ID" value="XM_006500389.1"/>
</dbReference>
<dbReference type="RefSeq" id="XP_030108062.1">
    <property type="nucleotide sequence ID" value="XM_030252202.2"/>
</dbReference>
<dbReference type="RefSeq" id="XP_030108063.1">
    <property type="nucleotide sequence ID" value="XM_030252203.2"/>
</dbReference>
<dbReference type="FunCoup" id="Q9EQC0">
    <property type="interactions" value="193"/>
</dbReference>
<dbReference type="STRING" id="10090.ENSMUSP00000064246"/>
<dbReference type="GlyCosmos" id="Q9EQC0">
    <property type="glycosylation" value="4 sites, No reported glycans"/>
</dbReference>
<dbReference type="GlyGen" id="Q9EQC0">
    <property type="glycosylation" value="4 sites, 2 N-linked glycans (2 sites)"/>
</dbReference>
<dbReference type="PhosphoSitePlus" id="Q9EQC0"/>
<dbReference type="PaxDb" id="10090-ENSMUSP00000064246"/>
<dbReference type="ProteomicsDB" id="281673"/>
<dbReference type="Antibodypedia" id="13251">
    <property type="antibodies" value="185 antibodies from 29 providers"/>
</dbReference>
<dbReference type="DNASU" id="76969"/>
<dbReference type="Ensembl" id="ENSMUST00000065797.7">
    <property type="protein sequence ID" value="ENSMUSP00000064246.7"/>
    <property type="gene ID" value="ENSMUSG00000027221.6"/>
</dbReference>
<dbReference type="GeneID" id="76969"/>
<dbReference type="KEGG" id="mmu:76969"/>
<dbReference type="UCSC" id="uc008lfk.2">
    <property type="organism name" value="mouse"/>
</dbReference>
<dbReference type="AGR" id="MGI:1924219"/>
<dbReference type="CTD" id="8534"/>
<dbReference type="MGI" id="MGI:1924219">
    <property type="gene designation" value="Chst1"/>
</dbReference>
<dbReference type="VEuPathDB" id="HostDB:ENSMUSG00000027221"/>
<dbReference type="eggNOG" id="ENOG502S17I">
    <property type="taxonomic scope" value="Eukaryota"/>
</dbReference>
<dbReference type="GeneTree" id="ENSGT00940000161262"/>
<dbReference type="HOGENOM" id="CLU_028381_3_2_1"/>
<dbReference type="InParanoid" id="Q9EQC0"/>
<dbReference type="OMA" id="NVKHWIR"/>
<dbReference type="OrthoDB" id="6138663at2759"/>
<dbReference type="PhylomeDB" id="Q9EQC0"/>
<dbReference type="TreeFam" id="TF342871"/>
<dbReference type="BRENDA" id="2.8.2.21">
    <property type="organism ID" value="3474"/>
</dbReference>
<dbReference type="Reactome" id="R-MMU-2022854">
    <property type="pathway name" value="Keratan sulfate biosynthesis"/>
</dbReference>
<dbReference type="BioGRID-ORCS" id="76969">
    <property type="hits" value="2 hits in 79 CRISPR screens"/>
</dbReference>
<dbReference type="ChiTaRS" id="Chst1">
    <property type="organism name" value="mouse"/>
</dbReference>
<dbReference type="PRO" id="PR:Q9EQC0"/>
<dbReference type="Proteomes" id="UP000000589">
    <property type="component" value="Chromosome 2"/>
</dbReference>
<dbReference type="RNAct" id="Q9EQC0">
    <property type="molecule type" value="protein"/>
</dbReference>
<dbReference type="Bgee" id="ENSMUSG00000027221">
    <property type="expression patterns" value="Expressed in lacrimal gland and 229 other cell types or tissues"/>
</dbReference>
<dbReference type="ExpressionAtlas" id="Q9EQC0">
    <property type="expression patterns" value="baseline and differential"/>
</dbReference>
<dbReference type="GO" id="GO:0000139">
    <property type="term" value="C:Golgi membrane"/>
    <property type="evidence" value="ECO:0007669"/>
    <property type="project" value="UniProtKB-SubCell"/>
</dbReference>
<dbReference type="GO" id="GO:0045130">
    <property type="term" value="F:keratan sulfotransferase activity"/>
    <property type="evidence" value="ECO:0000250"/>
    <property type="project" value="UniProtKB"/>
</dbReference>
<dbReference type="GO" id="GO:0006012">
    <property type="term" value="P:galactose metabolic process"/>
    <property type="evidence" value="ECO:0007669"/>
    <property type="project" value="Ensembl"/>
</dbReference>
<dbReference type="GO" id="GO:0006954">
    <property type="term" value="P:inflammatory response"/>
    <property type="evidence" value="ECO:0007669"/>
    <property type="project" value="UniProtKB-KW"/>
</dbReference>
<dbReference type="GO" id="GO:0018146">
    <property type="term" value="P:keratan sulfate proteoglycan biosynthetic process"/>
    <property type="evidence" value="ECO:0000250"/>
    <property type="project" value="UniProtKB"/>
</dbReference>
<dbReference type="GO" id="GO:0006790">
    <property type="term" value="P:sulfur compound metabolic process"/>
    <property type="evidence" value="ECO:0007669"/>
    <property type="project" value="Ensembl"/>
</dbReference>
<dbReference type="Gene3D" id="3.40.50.300">
    <property type="entry name" value="P-loop containing nucleotide triphosphate hydrolases"/>
    <property type="match status" value="1"/>
</dbReference>
<dbReference type="InterPro" id="IPR016469">
    <property type="entry name" value="Carbohydrate_sulfotransferase"/>
</dbReference>
<dbReference type="InterPro" id="IPR051135">
    <property type="entry name" value="Gal/GlcNAc/GalNAc_ST"/>
</dbReference>
<dbReference type="InterPro" id="IPR027417">
    <property type="entry name" value="P-loop_NTPase"/>
</dbReference>
<dbReference type="InterPro" id="IPR000863">
    <property type="entry name" value="Sulfotransferase_dom"/>
</dbReference>
<dbReference type="PANTHER" id="PTHR10704">
    <property type="entry name" value="CARBOHYDRATE SULFOTRANSFERASE"/>
    <property type="match status" value="1"/>
</dbReference>
<dbReference type="PANTHER" id="PTHR10704:SF36">
    <property type="entry name" value="CARBOHYDRATE SULFOTRANSFERASE 1"/>
    <property type="match status" value="1"/>
</dbReference>
<dbReference type="Pfam" id="PF00685">
    <property type="entry name" value="Sulfotransfer_1"/>
    <property type="match status" value="1"/>
</dbReference>
<dbReference type="PIRSF" id="PIRSF005883">
    <property type="entry name" value="Carbohydrate_sulfotransferase"/>
    <property type="match status" value="1"/>
</dbReference>
<dbReference type="SUPFAM" id="SSF52540">
    <property type="entry name" value="P-loop containing nucleoside triphosphate hydrolases"/>
    <property type="match status" value="1"/>
</dbReference>
<keyword id="KW-0119">Carbohydrate metabolism</keyword>
<keyword id="KW-0325">Glycoprotein</keyword>
<keyword id="KW-0333">Golgi apparatus</keyword>
<keyword id="KW-0395">Inflammatory response</keyword>
<keyword id="KW-0472">Membrane</keyword>
<keyword id="KW-1185">Reference proteome</keyword>
<keyword id="KW-0735">Signal-anchor</keyword>
<keyword id="KW-0808">Transferase</keyword>
<keyword id="KW-0812">Transmembrane</keyword>
<keyword id="KW-1133">Transmembrane helix</keyword>
<gene>
    <name type="primary">Chst1</name>
    <name type="synonym">Gst1</name>
</gene>
<reference key="1">
    <citation type="journal article" date="2001" name="Glycobiology">
        <title>Chromosomal localization and genomic organization for the galactose/ N-acetylgalactosamine/N-acetylglucosamine 6-O-sulfotransferase gene family.</title>
        <authorList>
            <person name="Hemmerich S."/>
            <person name="Lee J.K."/>
            <person name="Bhakta S."/>
            <person name="Bistrup A."/>
            <person name="Ruddle N.R."/>
            <person name="Rosen S.D."/>
        </authorList>
    </citation>
    <scope>NUCLEOTIDE SEQUENCE [MRNA]</scope>
    <source>
        <strain>C57BL/6J</strain>
        <tissue>Mammary gland</tissue>
    </source>
</reference>
<reference key="2">
    <citation type="journal article" date="2004" name="Genome Res.">
        <title>The status, quality, and expansion of the NIH full-length cDNA project: the Mammalian Gene Collection (MGC).</title>
        <authorList>
            <consortium name="The MGC Project Team"/>
        </authorList>
    </citation>
    <scope>NUCLEOTIDE SEQUENCE [LARGE SCALE MRNA]</scope>
    <source>
        <strain>C57BL/6J</strain>
        <tissue>Mammary gland</tissue>
    </source>
</reference>
<reference key="3">
    <citation type="journal article" date="2005" name="Science">
        <title>The transcriptional landscape of the mammalian genome.</title>
        <authorList>
            <person name="Carninci P."/>
            <person name="Kasukawa T."/>
            <person name="Katayama S."/>
            <person name="Gough J."/>
            <person name="Frith M.C."/>
            <person name="Maeda N."/>
            <person name="Oyama R."/>
            <person name="Ravasi T."/>
            <person name="Lenhard B."/>
            <person name="Wells C."/>
            <person name="Kodzius R."/>
            <person name="Shimokawa K."/>
            <person name="Bajic V.B."/>
            <person name="Brenner S.E."/>
            <person name="Batalov S."/>
            <person name="Forrest A.R."/>
            <person name="Zavolan M."/>
            <person name="Davis M.J."/>
            <person name="Wilming L.G."/>
            <person name="Aidinis V."/>
            <person name="Allen J.E."/>
            <person name="Ambesi-Impiombato A."/>
            <person name="Apweiler R."/>
            <person name="Aturaliya R.N."/>
            <person name="Bailey T.L."/>
            <person name="Bansal M."/>
            <person name="Baxter L."/>
            <person name="Beisel K.W."/>
            <person name="Bersano T."/>
            <person name="Bono H."/>
            <person name="Chalk A.M."/>
            <person name="Chiu K.P."/>
            <person name="Choudhary V."/>
            <person name="Christoffels A."/>
            <person name="Clutterbuck D.R."/>
            <person name="Crowe M.L."/>
            <person name="Dalla E."/>
            <person name="Dalrymple B.P."/>
            <person name="de Bono B."/>
            <person name="Della Gatta G."/>
            <person name="di Bernardo D."/>
            <person name="Down T."/>
            <person name="Engstrom P."/>
            <person name="Fagiolini M."/>
            <person name="Faulkner G."/>
            <person name="Fletcher C.F."/>
            <person name="Fukushima T."/>
            <person name="Furuno M."/>
            <person name="Futaki S."/>
            <person name="Gariboldi M."/>
            <person name="Georgii-Hemming P."/>
            <person name="Gingeras T.R."/>
            <person name="Gojobori T."/>
            <person name="Green R.E."/>
            <person name="Gustincich S."/>
            <person name="Harbers M."/>
            <person name="Hayashi Y."/>
            <person name="Hensch T.K."/>
            <person name="Hirokawa N."/>
            <person name="Hill D."/>
            <person name="Huminiecki L."/>
            <person name="Iacono M."/>
            <person name="Ikeo K."/>
            <person name="Iwama A."/>
            <person name="Ishikawa T."/>
            <person name="Jakt M."/>
            <person name="Kanapin A."/>
            <person name="Katoh M."/>
            <person name="Kawasawa Y."/>
            <person name="Kelso J."/>
            <person name="Kitamura H."/>
            <person name="Kitano H."/>
            <person name="Kollias G."/>
            <person name="Krishnan S.P."/>
            <person name="Kruger A."/>
            <person name="Kummerfeld S.K."/>
            <person name="Kurochkin I.V."/>
            <person name="Lareau L.F."/>
            <person name="Lazarevic D."/>
            <person name="Lipovich L."/>
            <person name="Liu J."/>
            <person name="Liuni S."/>
            <person name="McWilliam S."/>
            <person name="Madan Babu M."/>
            <person name="Madera M."/>
            <person name="Marchionni L."/>
            <person name="Matsuda H."/>
            <person name="Matsuzawa S."/>
            <person name="Miki H."/>
            <person name="Mignone F."/>
            <person name="Miyake S."/>
            <person name="Morris K."/>
            <person name="Mottagui-Tabar S."/>
            <person name="Mulder N."/>
            <person name="Nakano N."/>
            <person name="Nakauchi H."/>
            <person name="Ng P."/>
            <person name="Nilsson R."/>
            <person name="Nishiguchi S."/>
            <person name="Nishikawa S."/>
            <person name="Nori F."/>
            <person name="Ohara O."/>
            <person name="Okazaki Y."/>
            <person name="Orlando V."/>
            <person name="Pang K.C."/>
            <person name="Pavan W.J."/>
            <person name="Pavesi G."/>
            <person name="Pesole G."/>
            <person name="Petrovsky N."/>
            <person name="Piazza S."/>
            <person name="Reed J."/>
            <person name="Reid J.F."/>
            <person name="Ring B.Z."/>
            <person name="Ringwald M."/>
            <person name="Rost B."/>
            <person name="Ruan Y."/>
            <person name="Salzberg S.L."/>
            <person name="Sandelin A."/>
            <person name="Schneider C."/>
            <person name="Schoenbach C."/>
            <person name="Sekiguchi K."/>
            <person name="Semple C.A."/>
            <person name="Seno S."/>
            <person name="Sessa L."/>
            <person name="Sheng Y."/>
            <person name="Shibata Y."/>
            <person name="Shimada H."/>
            <person name="Shimada K."/>
            <person name="Silva D."/>
            <person name="Sinclair B."/>
            <person name="Sperling S."/>
            <person name="Stupka E."/>
            <person name="Sugiura K."/>
            <person name="Sultana R."/>
            <person name="Takenaka Y."/>
            <person name="Taki K."/>
            <person name="Tammoja K."/>
            <person name="Tan S.L."/>
            <person name="Tang S."/>
            <person name="Taylor M.S."/>
            <person name="Tegner J."/>
            <person name="Teichmann S.A."/>
            <person name="Ueda H.R."/>
            <person name="van Nimwegen E."/>
            <person name="Verardo R."/>
            <person name="Wei C.L."/>
            <person name="Yagi K."/>
            <person name="Yamanishi H."/>
            <person name="Zabarovsky E."/>
            <person name="Zhu S."/>
            <person name="Zimmer A."/>
            <person name="Hide W."/>
            <person name="Bult C."/>
            <person name="Grimmond S.M."/>
            <person name="Teasdale R.D."/>
            <person name="Liu E.T."/>
            <person name="Brusic V."/>
            <person name="Quackenbush J."/>
            <person name="Wahlestedt C."/>
            <person name="Mattick J.S."/>
            <person name="Hume D.A."/>
            <person name="Kai C."/>
            <person name="Sasaki D."/>
            <person name="Tomaru Y."/>
            <person name="Fukuda S."/>
            <person name="Kanamori-Katayama M."/>
            <person name="Suzuki M."/>
            <person name="Aoki J."/>
            <person name="Arakawa T."/>
            <person name="Iida J."/>
            <person name="Imamura K."/>
            <person name="Itoh M."/>
            <person name="Kato T."/>
            <person name="Kawaji H."/>
            <person name="Kawagashira N."/>
            <person name="Kawashima T."/>
            <person name="Kojima M."/>
            <person name="Kondo S."/>
            <person name="Konno H."/>
            <person name="Nakano K."/>
            <person name="Ninomiya N."/>
            <person name="Nishio T."/>
            <person name="Okada M."/>
            <person name="Plessy C."/>
            <person name="Shibata K."/>
            <person name="Shiraki T."/>
            <person name="Suzuki S."/>
            <person name="Tagami M."/>
            <person name="Waki K."/>
            <person name="Watahiki A."/>
            <person name="Okamura-Oho Y."/>
            <person name="Suzuki H."/>
            <person name="Kawai J."/>
            <person name="Hayashizaki Y."/>
        </authorList>
    </citation>
    <scope>NUCLEOTIDE SEQUENCE [LARGE SCALE MRNA] OF 292-411</scope>
    <source>
        <strain>C57BL/6J</strain>
    </source>
</reference>
<reference key="4">
    <citation type="journal article" date="2013" name="Glycobiology">
        <title>KSGal6ST generates galactose-6-O-sulfate in high endothelial venules but does not contribute to L-selectin-dependent lymphocyte homing.</title>
        <authorList>
            <person name="Patnode M.L."/>
            <person name="Yu S.Y."/>
            <person name="Cheng C.W."/>
            <person name="Ho M.Y."/>
            <person name="Tegesjoe L."/>
            <person name="Sakuma K."/>
            <person name="Uchimura K."/>
            <person name="Khoo K.H."/>
            <person name="Kannagi R."/>
            <person name="Rosen S.D."/>
        </authorList>
    </citation>
    <scope>FUNCTION</scope>
    <scope>DISRUPTION PHENOTYPE</scope>
    <scope>TISSUE SPECIFICITY</scope>
</reference>
<reference key="5">
    <citation type="journal article" date="2014" name="J. Histochem. Cytochem.">
        <title>KSGal6ST is essential for the 6-sulfation of galactose within keratan sulfate in early postnatal brain.</title>
        <authorList>
            <person name="Hoshino H."/>
            <person name="Foyez T."/>
            <person name="Ohtake-Niimi S."/>
            <person name="Takeda-Uchimura Y."/>
            <person name="Michikawa M."/>
            <person name="Kadomatsu K."/>
            <person name="Uchimura K."/>
        </authorList>
    </citation>
    <scope>FUNCTION</scope>
    <scope>CATALYTIC ACTIVITY</scope>
    <scope>PATHWAY</scope>
    <scope>TISSUE SPECIFICITY</scope>
    <scope>DEVELOPMENTAL STAGE</scope>
</reference>
<feature type="chain" id="PRO_0000085183" description="Carbohydrate sulfotransferase 1">
    <location>
        <begin position="1"/>
        <end position="411"/>
    </location>
</feature>
<feature type="topological domain" description="Cytoplasmic" evidence="3">
    <location>
        <begin position="1"/>
        <end position="2"/>
    </location>
</feature>
<feature type="transmembrane region" description="Helical; Signal-anchor for type II membrane protein" evidence="3">
    <location>
        <begin position="3"/>
        <end position="23"/>
    </location>
</feature>
<feature type="topological domain" description="Lumenal" evidence="3">
    <location>
        <begin position="24"/>
        <end position="411"/>
    </location>
</feature>
<feature type="short sequence motif" description="Cell attachment site" evidence="3">
    <location>
        <begin position="337"/>
        <end position="339"/>
    </location>
</feature>
<feature type="binding site" evidence="1">
    <location>
        <begin position="69"/>
        <end position="75"/>
    </location>
    <ligand>
        <name>3'-phosphoadenylyl sulfate</name>
        <dbReference type="ChEBI" id="CHEBI:58339"/>
    </ligand>
</feature>
<feature type="binding site" evidence="1">
    <location>
        <begin position="234"/>
        <end position="242"/>
    </location>
    <ligand>
        <name>3'-phosphoadenylyl sulfate</name>
        <dbReference type="ChEBI" id="CHEBI:58339"/>
    </ligand>
</feature>
<feature type="glycosylation site" description="N-linked (GlcNAc...) asparagine" evidence="3">
    <location>
        <position position="56"/>
    </location>
</feature>
<feature type="glycosylation site" description="N-linked (GlcNAc...) asparagine" evidence="3">
    <location>
        <position position="145"/>
    </location>
</feature>
<feature type="glycosylation site" description="N-linked (GlcNAc...) asparagine" evidence="3">
    <location>
        <position position="189"/>
    </location>
</feature>
<feature type="glycosylation site" description="N-linked (GlcNAc...) asparagine" evidence="3">
    <location>
        <position position="334"/>
    </location>
</feature>
<name>CHST1_MOUSE</name>
<organism>
    <name type="scientific">Mus musculus</name>
    <name type="common">Mouse</name>
    <dbReference type="NCBI Taxonomy" id="10090"/>
    <lineage>
        <taxon>Eukaryota</taxon>
        <taxon>Metazoa</taxon>
        <taxon>Chordata</taxon>
        <taxon>Craniata</taxon>
        <taxon>Vertebrata</taxon>
        <taxon>Euteleostomi</taxon>
        <taxon>Mammalia</taxon>
        <taxon>Eutheria</taxon>
        <taxon>Euarchontoglires</taxon>
        <taxon>Glires</taxon>
        <taxon>Rodentia</taxon>
        <taxon>Myomorpha</taxon>
        <taxon>Muroidea</taxon>
        <taxon>Muridae</taxon>
        <taxon>Murinae</taxon>
        <taxon>Mus</taxon>
        <taxon>Mus</taxon>
    </lineage>
</organism>
<accession>Q9EQC0</accession>
<accession>Q9D0K5</accession>
<protein>
    <recommendedName>
        <fullName>Carbohydrate sulfotransferase 1</fullName>
    </recommendedName>
    <alternativeName>
        <fullName>Galactose/N-acetylglucosamine/N-acetylglucosamine 6-O-sulfotransferase 1</fullName>
        <shortName>GST-1</shortName>
    </alternativeName>
    <alternativeName>
        <fullName>Keratan sulfate Gal-6 sulfotransferase</fullName>
        <shortName>KS6ST</shortName>
        <shortName>KSGal6ST</shortName>
        <shortName>KSST</shortName>
        <ecNumber evidence="5">2.8.2.21</ecNumber>
    </alternativeName>
</protein>
<sequence>MQCSWKAVLLLALASIAIQYTAIRTFTAKSFHTCPGLTDTGLAERLCEEGPTFSYNLSRKTHVLILATTRSGSSFVGQLFNQHMDVFYLFEPLYHVQNTLIPRFTQGKSPADRRVMLGASRDLLRSLYDCDLYFLENYIKPPPVNHTTNRVFRRGASRVLCSRPVCDPPGSSDLILEEGDCVRMCGLLNLTLAAEACRERSHVAIKTVRVPEVNDLRALVEDPRLNLKVIQLVRDPRGILASRSETFRDTYRLWRLWYGTGRKPYNLDVTQLTTVCEDFSSSVSTGLMRPSWLKGKYMLVRYEDLARNPMKKTEEIYEFLGIPLDSHVAHWIQNNTRGDPTLGKHKYSTVRNSAATAEKWRFRLSYDIVAFAQNACQQVLAQLGYKMANSEEELKNPAISLVEERDFRPFL</sequence>
<comment type="function">
    <text evidence="2 4 5">Sulfotransferase that utilizes 3'-phospho-5'-adenylyl sulfate (PAPS) as sulfonate donor to catalyze the transfer of sulfate to position 6 of internal galactose (Gal) residues of keratan. Cooperates with B4GALT4 and B3GNT7 glycosyltransferases and CHST6 sulfotransferase to construct and elongate disulfated disaccharide unit [-&gt;3(6-sulfoGalbeta)1-&gt;4(6-sulfoGlcNAcbeta)1-&gt;] within keratan sulfate polymer. Has a preference for sulfating keratan sulfate, but it also transfers sulfate to the unsulfated polymer (By similarity). Involved in biosynthesis of phosphacan, a major keratan sulfate proteoglycan in the developing brain (PubMed:24152993). Involved in biosynthesis of 6-sulfoGalbeta-containing O-linked glycans in high endothelial venules of lymph nodes. May act in a synergistic manner with CHST4 to generate sialyl 6',6-disulfo Lewis X motif, a recognition determinant for immune cell receptors implicated in leukocyte trafficking (By similarity) (PubMed:23254996). Catalyzes sulfation of N-acetyllactosamine (LacNAc) oligosaccharides with highest efficiency for sialylated LacNAc structures (By similarity).</text>
</comment>
<comment type="catalytic activity">
    <reaction evidence="5">
        <text>3'-phosphoadenylyl sulfate + keratan = adenosine 3',5'-bisphosphate + keratan 6'-sulfate.</text>
        <dbReference type="EC" id="2.8.2.21"/>
    </reaction>
</comment>
<comment type="pathway">
    <text evidence="5">Glycan metabolism.</text>
</comment>
<comment type="subcellular location">
    <subcellularLocation>
        <location evidence="1">Golgi apparatus membrane</location>
        <topology evidence="1">Single-pass type II membrane protein</topology>
    </subcellularLocation>
</comment>
<comment type="tissue specificity">
    <text evidence="4 5">Broadly expressed with highest levels in central nervous system. Expressed in cortex (at protein level) (PubMed:23254996, PubMed:24152993). Expressed in high endothelial venules in peripheral lymph nodes, mesenteric lymph nodes and Peyer's patches (PubMed:23254996).</text>
</comment>
<comment type="developmental stage">
    <text evidence="5">Expressed in cortex and cerebellum throughout the postnatal period (at protein level).</text>
</comment>
<comment type="disruption phenotype">
    <text evidence="4">Mutant mice are born at the expected Mendelian rate and have normal developmental and reproductive potential.</text>
</comment>
<comment type="similarity">
    <text evidence="6">Belongs to the sulfotransferase 1 family. Gal/GlcNAc/GalNAc subfamily.</text>
</comment>
<proteinExistence type="evidence at protein level"/>
<evidence type="ECO:0000250" key="1"/>
<evidence type="ECO:0000250" key="2">
    <source>
        <dbReference type="UniProtKB" id="O43916"/>
    </source>
</evidence>
<evidence type="ECO:0000255" key="3"/>
<evidence type="ECO:0000269" key="4">
    <source>
    </source>
</evidence>
<evidence type="ECO:0000269" key="5">
    <source>
    </source>
</evidence>
<evidence type="ECO:0000305" key="6"/>